<gene>
    <name evidence="1" type="primary">ruvA</name>
    <name type="ordered locus">BAMEG_4685</name>
</gene>
<evidence type="ECO:0000255" key="1">
    <source>
        <dbReference type="HAMAP-Rule" id="MF_00031"/>
    </source>
</evidence>
<reference key="1">
    <citation type="submission" date="2008-10" db="EMBL/GenBank/DDBJ databases">
        <title>Genome sequence of Bacillus anthracis str. CDC 684.</title>
        <authorList>
            <person name="Dodson R.J."/>
            <person name="Munk A.C."/>
            <person name="Brettin T."/>
            <person name="Bruce D."/>
            <person name="Detter C."/>
            <person name="Tapia R."/>
            <person name="Han C."/>
            <person name="Sutton G."/>
            <person name="Sims D."/>
        </authorList>
    </citation>
    <scope>NUCLEOTIDE SEQUENCE [LARGE SCALE GENOMIC DNA]</scope>
    <source>
        <strain>CDC 684 / NRRL 3495</strain>
    </source>
</reference>
<accession>C3L6V0</accession>
<sequence length="205" mass="23194">MFEYVTGYVEYVGPEYVVIDHNGIGYQIFTPNPYVFQRSKQEIRVYTYHYVREDIMALYGFKTREERLLFTKLLGVSGIGPKGALAILASGQTGQVVQAIEHEDEKFLVKFPGVGKKTARQMILDLKGKLADVVPDAFVDLFSDEERFDEKKGSSAELDEALEALRALGYAEREVSRVVPELLKESLTTDQYIKKALSLLLNGKR</sequence>
<organism>
    <name type="scientific">Bacillus anthracis (strain CDC 684 / NRRL 3495)</name>
    <dbReference type="NCBI Taxonomy" id="568206"/>
    <lineage>
        <taxon>Bacteria</taxon>
        <taxon>Bacillati</taxon>
        <taxon>Bacillota</taxon>
        <taxon>Bacilli</taxon>
        <taxon>Bacillales</taxon>
        <taxon>Bacillaceae</taxon>
        <taxon>Bacillus</taxon>
        <taxon>Bacillus cereus group</taxon>
    </lineage>
</organism>
<keyword id="KW-0963">Cytoplasm</keyword>
<keyword id="KW-0227">DNA damage</keyword>
<keyword id="KW-0233">DNA recombination</keyword>
<keyword id="KW-0234">DNA repair</keyword>
<keyword id="KW-0238">DNA-binding</keyword>
<name>RUVA_BACAC</name>
<proteinExistence type="inferred from homology"/>
<dbReference type="EMBL" id="CP001215">
    <property type="protein sequence ID" value="ACP13777.1"/>
    <property type="molecule type" value="Genomic_DNA"/>
</dbReference>
<dbReference type="RefSeq" id="WP_000464508.1">
    <property type="nucleotide sequence ID" value="NC_012581.1"/>
</dbReference>
<dbReference type="SMR" id="C3L6V0"/>
<dbReference type="GeneID" id="93006680"/>
<dbReference type="KEGG" id="bah:BAMEG_4685"/>
<dbReference type="HOGENOM" id="CLU_087936_1_0_9"/>
<dbReference type="GO" id="GO:0005737">
    <property type="term" value="C:cytoplasm"/>
    <property type="evidence" value="ECO:0007669"/>
    <property type="project" value="UniProtKB-SubCell"/>
</dbReference>
<dbReference type="GO" id="GO:0009379">
    <property type="term" value="C:Holliday junction helicase complex"/>
    <property type="evidence" value="ECO:0007669"/>
    <property type="project" value="InterPro"/>
</dbReference>
<dbReference type="GO" id="GO:0048476">
    <property type="term" value="C:Holliday junction resolvase complex"/>
    <property type="evidence" value="ECO:0007669"/>
    <property type="project" value="UniProtKB-UniRule"/>
</dbReference>
<dbReference type="GO" id="GO:0005524">
    <property type="term" value="F:ATP binding"/>
    <property type="evidence" value="ECO:0007669"/>
    <property type="project" value="InterPro"/>
</dbReference>
<dbReference type="GO" id="GO:0000400">
    <property type="term" value="F:four-way junction DNA binding"/>
    <property type="evidence" value="ECO:0007669"/>
    <property type="project" value="UniProtKB-UniRule"/>
</dbReference>
<dbReference type="GO" id="GO:0009378">
    <property type="term" value="F:four-way junction helicase activity"/>
    <property type="evidence" value="ECO:0007669"/>
    <property type="project" value="InterPro"/>
</dbReference>
<dbReference type="GO" id="GO:0006310">
    <property type="term" value="P:DNA recombination"/>
    <property type="evidence" value="ECO:0007669"/>
    <property type="project" value="UniProtKB-UniRule"/>
</dbReference>
<dbReference type="GO" id="GO:0006281">
    <property type="term" value="P:DNA repair"/>
    <property type="evidence" value="ECO:0007669"/>
    <property type="project" value="UniProtKB-UniRule"/>
</dbReference>
<dbReference type="CDD" id="cd14332">
    <property type="entry name" value="UBA_RuvA_C"/>
    <property type="match status" value="1"/>
</dbReference>
<dbReference type="Gene3D" id="1.10.150.20">
    <property type="entry name" value="5' to 3' exonuclease, C-terminal subdomain"/>
    <property type="match status" value="1"/>
</dbReference>
<dbReference type="Gene3D" id="1.10.8.10">
    <property type="entry name" value="DNA helicase RuvA subunit, C-terminal domain"/>
    <property type="match status" value="1"/>
</dbReference>
<dbReference type="Gene3D" id="2.40.50.140">
    <property type="entry name" value="Nucleic acid-binding proteins"/>
    <property type="match status" value="1"/>
</dbReference>
<dbReference type="HAMAP" id="MF_00031">
    <property type="entry name" value="DNA_HJ_migration_RuvA"/>
    <property type="match status" value="1"/>
</dbReference>
<dbReference type="InterPro" id="IPR013849">
    <property type="entry name" value="DNA_helicase_Holl-junc_RuvA_I"/>
</dbReference>
<dbReference type="InterPro" id="IPR003583">
    <property type="entry name" value="Hlx-hairpin-Hlx_DNA-bd_motif"/>
</dbReference>
<dbReference type="InterPro" id="IPR012340">
    <property type="entry name" value="NA-bd_OB-fold"/>
</dbReference>
<dbReference type="InterPro" id="IPR000085">
    <property type="entry name" value="RuvA"/>
</dbReference>
<dbReference type="InterPro" id="IPR010994">
    <property type="entry name" value="RuvA_2-like"/>
</dbReference>
<dbReference type="InterPro" id="IPR011114">
    <property type="entry name" value="RuvA_C"/>
</dbReference>
<dbReference type="InterPro" id="IPR036267">
    <property type="entry name" value="RuvA_C_sf"/>
</dbReference>
<dbReference type="NCBIfam" id="TIGR00084">
    <property type="entry name" value="ruvA"/>
    <property type="match status" value="1"/>
</dbReference>
<dbReference type="Pfam" id="PF14520">
    <property type="entry name" value="HHH_5"/>
    <property type="match status" value="1"/>
</dbReference>
<dbReference type="Pfam" id="PF07499">
    <property type="entry name" value="RuvA_C"/>
    <property type="match status" value="1"/>
</dbReference>
<dbReference type="Pfam" id="PF01330">
    <property type="entry name" value="RuvA_N"/>
    <property type="match status" value="1"/>
</dbReference>
<dbReference type="SMART" id="SM00278">
    <property type="entry name" value="HhH1"/>
    <property type="match status" value="2"/>
</dbReference>
<dbReference type="SUPFAM" id="SSF46929">
    <property type="entry name" value="DNA helicase RuvA subunit, C-terminal domain"/>
    <property type="match status" value="1"/>
</dbReference>
<dbReference type="SUPFAM" id="SSF50249">
    <property type="entry name" value="Nucleic acid-binding proteins"/>
    <property type="match status" value="1"/>
</dbReference>
<dbReference type="SUPFAM" id="SSF47781">
    <property type="entry name" value="RuvA domain 2-like"/>
    <property type="match status" value="1"/>
</dbReference>
<protein>
    <recommendedName>
        <fullName evidence="1">Holliday junction branch migration complex subunit RuvA</fullName>
    </recommendedName>
</protein>
<feature type="chain" id="PRO_1000195114" description="Holliday junction branch migration complex subunit RuvA">
    <location>
        <begin position="1"/>
        <end position="205"/>
    </location>
</feature>
<feature type="region of interest" description="Domain I" evidence="1">
    <location>
        <begin position="1"/>
        <end position="62"/>
    </location>
</feature>
<feature type="region of interest" description="Domain II" evidence="1">
    <location>
        <begin position="63"/>
        <end position="141"/>
    </location>
</feature>
<feature type="region of interest" description="Flexible linker" evidence="1">
    <location>
        <begin position="142"/>
        <end position="152"/>
    </location>
</feature>
<feature type="region of interest" description="Domain III" evidence="1">
    <location>
        <begin position="153"/>
        <end position="205"/>
    </location>
</feature>
<comment type="function">
    <text evidence="1">The RuvA-RuvB-RuvC complex processes Holliday junction (HJ) DNA during genetic recombination and DNA repair, while the RuvA-RuvB complex plays an important role in the rescue of blocked DNA replication forks via replication fork reversal (RFR). RuvA specifically binds to HJ cruciform DNA, conferring on it an open structure. The RuvB hexamer acts as an ATP-dependent pump, pulling dsDNA into and through the RuvAB complex. HJ branch migration allows RuvC to scan DNA until it finds its consensus sequence, where it cleaves and resolves the cruciform DNA.</text>
</comment>
<comment type="subunit">
    <text evidence="1">Homotetramer. Forms an RuvA(8)-RuvB(12)-Holliday junction (HJ) complex. HJ DNA is sandwiched between 2 RuvA tetramers; dsDNA enters through RuvA and exits via RuvB. An RuvB hexamer assembles on each DNA strand where it exits the tetramer. Each RuvB hexamer is contacted by two RuvA subunits (via domain III) on 2 adjacent RuvB subunits; this complex drives branch migration. In the full resolvosome a probable DNA-RuvA(4)-RuvB(12)-RuvC(2) complex forms which resolves the HJ.</text>
</comment>
<comment type="subcellular location">
    <subcellularLocation>
        <location evidence="1">Cytoplasm</location>
    </subcellularLocation>
</comment>
<comment type="domain">
    <text evidence="1">Has three domains with a flexible linker between the domains II and III and assumes an 'L' shape. Domain III is highly mobile and contacts RuvB.</text>
</comment>
<comment type="similarity">
    <text evidence="1">Belongs to the RuvA family.</text>
</comment>